<name>DDL_ACIBC</name>
<gene>
    <name evidence="2" type="primary">ddl</name>
    <name type="ordered locus">ACICU_03532</name>
</gene>
<dbReference type="EC" id="6.3.2.4" evidence="2"/>
<dbReference type="EMBL" id="CP000863">
    <property type="protein sequence ID" value="ACC58841.1"/>
    <property type="molecule type" value="Genomic_DNA"/>
</dbReference>
<dbReference type="RefSeq" id="WP_000063661.1">
    <property type="nucleotide sequence ID" value="NZ_CP031380.1"/>
</dbReference>
<dbReference type="PDB" id="5D8D">
    <property type="method" value="X-ray"/>
    <property type="resolution" value="2.19 A"/>
    <property type="chains" value="A/B/C/D/E/F=1-308"/>
</dbReference>
<dbReference type="PDB" id="5DMX">
    <property type="method" value="X-ray"/>
    <property type="resolution" value="2.81 A"/>
    <property type="chains" value="A/B/C/D/E/F=1-308"/>
</dbReference>
<dbReference type="PDBsum" id="5D8D"/>
<dbReference type="PDBsum" id="5DMX"/>
<dbReference type="SMR" id="B2I1J3"/>
<dbReference type="KEGG" id="abc:ACICU_03532"/>
<dbReference type="HOGENOM" id="CLU_039268_1_2_6"/>
<dbReference type="UniPathway" id="UPA00219"/>
<dbReference type="Proteomes" id="UP000008839">
    <property type="component" value="Chromosome"/>
</dbReference>
<dbReference type="GO" id="GO:0005829">
    <property type="term" value="C:cytosol"/>
    <property type="evidence" value="ECO:0007669"/>
    <property type="project" value="TreeGrafter"/>
</dbReference>
<dbReference type="GO" id="GO:0005524">
    <property type="term" value="F:ATP binding"/>
    <property type="evidence" value="ECO:0007669"/>
    <property type="project" value="UniProtKB-KW"/>
</dbReference>
<dbReference type="GO" id="GO:0008716">
    <property type="term" value="F:D-alanine-D-alanine ligase activity"/>
    <property type="evidence" value="ECO:0007669"/>
    <property type="project" value="UniProtKB-UniRule"/>
</dbReference>
<dbReference type="GO" id="GO:0046872">
    <property type="term" value="F:metal ion binding"/>
    <property type="evidence" value="ECO:0007669"/>
    <property type="project" value="UniProtKB-KW"/>
</dbReference>
<dbReference type="GO" id="GO:0071555">
    <property type="term" value="P:cell wall organization"/>
    <property type="evidence" value="ECO:0007669"/>
    <property type="project" value="UniProtKB-KW"/>
</dbReference>
<dbReference type="GO" id="GO:0009252">
    <property type="term" value="P:peptidoglycan biosynthetic process"/>
    <property type="evidence" value="ECO:0007669"/>
    <property type="project" value="UniProtKB-UniRule"/>
</dbReference>
<dbReference type="GO" id="GO:0008360">
    <property type="term" value="P:regulation of cell shape"/>
    <property type="evidence" value="ECO:0007669"/>
    <property type="project" value="UniProtKB-KW"/>
</dbReference>
<dbReference type="FunFam" id="3.30.1490.20:FF:000007">
    <property type="entry name" value="D-alanine--D-alanine ligase"/>
    <property type="match status" value="1"/>
</dbReference>
<dbReference type="FunFam" id="3.30.470.20:FF:000008">
    <property type="entry name" value="D-alanine--D-alanine ligase"/>
    <property type="match status" value="1"/>
</dbReference>
<dbReference type="Gene3D" id="3.40.50.20">
    <property type="match status" value="1"/>
</dbReference>
<dbReference type="Gene3D" id="3.30.470.20">
    <property type="entry name" value="ATP-grasp fold, B domain"/>
    <property type="match status" value="1"/>
</dbReference>
<dbReference type="HAMAP" id="MF_00047">
    <property type="entry name" value="Dala_Dala_lig"/>
    <property type="match status" value="1"/>
</dbReference>
<dbReference type="InterPro" id="IPR011761">
    <property type="entry name" value="ATP-grasp"/>
</dbReference>
<dbReference type="InterPro" id="IPR000291">
    <property type="entry name" value="D-Ala_lig_Van_CS"/>
</dbReference>
<dbReference type="InterPro" id="IPR005905">
    <property type="entry name" value="D_ala_D_ala"/>
</dbReference>
<dbReference type="InterPro" id="IPR011095">
    <property type="entry name" value="Dala_Dala_lig_C"/>
</dbReference>
<dbReference type="InterPro" id="IPR011127">
    <property type="entry name" value="Dala_Dala_lig_N"/>
</dbReference>
<dbReference type="InterPro" id="IPR016185">
    <property type="entry name" value="PreATP-grasp_dom_sf"/>
</dbReference>
<dbReference type="NCBIfam" id="TIGR01205">
    <property type="entry name" value="D_ala_D_alaTIGR"/>
    <property type="match status" value="1"/>
</dbReference>
<dbReference type="NCBIfam" id="NF002378">
    <property type="entry name" value="PRK01372.1"/>
    <property type="match status" value="1"/>
</dbReference>
<dbReference type="PANTHER" id="PTHR23132">
    <property type="entry name" value="D-ALANINE--D-ALANINE LIGASE"/>
    <property type="match status" value="1"/>
</dbReference>
<dbReference type="PANTHER" id="PTHR23132:SF23">
    <property type="entry name" value="D-ALANINE--D-ALANINE LIGASE B"/>
    <property type="match status" value="1"/>
</dbReference>
<dbReference type="Pfam" id="PF07478">
    <property type="entry name" value="Dala_Dala_lig_C"/>
    <property type="match status" value="1"/>
</dbReference>
<dbReference type="Pfam" id="PF01820">
    <property type="entry name" value="Dala_Dala_lig_N"/>
    <property type="match status" value="1"/>
</dbReference>
<dbReference type="PIRSF" id="PIRSF039102">
    <property type="entry name" value="Ddl/VanB"/>
    <property type="match status" value="1"/>
</dbReference>
<dbReference type="SUPFAM" id="SSF56059">
    <property type="entry name" value="Glutathione synthetase ATP-binding domain-like"/>
    <property type="match status" value="1"/>
</dbReference>
<dbReference type="SUPFAM" id="SSF52440">
    <property type="entry name" value="PreATP-grasp domain"/>
    <property type="match status" value="1"/>
</dbReference>
<dbReference type="PROSITE" id="PS50975">
    <property type="entry name" value="ATP_GRASP"/>
    <property type="match status" value="1"/>
</dbReference>
<dbReference type="PROSITE" id="PS00843">
    <property type="entry name" value="DALA_DALA_LIGASE_1"/>
    <property type="match status" value="1"/>
</dbReference>
<dbReference type="PROSITE" id="PS00844">
    <property type="entry name" value="DALA_DALA_LIGASE_2"/>
    <property type="match status" value="1"/>
</dbReference>
<protein>
    <recommendedName>
        <fullName evidence="2">D-alanine--D-alanine ligase</fullName>
        <ecNumber evidence="2">6.3.2.4</ecNumber>
    </recommendedName>
    <alternativeName>
        <fullName evidence="2">D-Ala-D-Ala ligase</fullName>
    </alternativeName>
    <alternativeName>
        <fullName evidence="2">D-alanylalanine synthetase</fullName>
    </alternativeName>
</protein>
<reference key="1">
    <citation type="journal article" date="2008" name="Antimicrob. Agents Chemother.">
        <title>Whole-genome pyrosequencing of an epidemic multidrug-resistant Acinetobacter baumannii strain belonging to the European clone II group.</title>
        <authorList>
            <person name="Iacono M."/>
            <person name="Villa L."/>
            <person name="Fortini D."/>
            <person name="Bordoni R."/>
            <person name="Imperi F."/>
            <person name="Bonnal R.J."/>
            <person name="Sicheritz-Ponten T."/>
            <person name="De Bellis G."/>
            <person name="Visca P."/>
            <person name="Cassone A."/>
            <person name="Carattoli A."/>
        </authorList>
    </citation>
    <scope>NUCLEOTIDE SEQUENCE [LARGE SCALE GENOMIC DNA]</scope>
    <source>
        <strain>ACICU</strain>
    </source>
</reference>
<organism>
    <name type="scientific">Acinetobacter baumannii (strain ACICU)</name>
    <dbReference type="NCBI Taxonomy" id="405416"/>
    <lineage>
        <taxon>Bacteria</taxon>
        <taxon>Pseudomonadati</taxon>
        <taxon>Pseudomonadota</taxon>
        <taxon>Gammaproteobacteria</taxon>
        <taxon>Moraxellales</taxon>
        <taxon>Moraxellaceae</taxon>
        <taxon>Acinetobacter</taxon>
        <taxon>Acinetobacter calcoaceticus/baumannii complex</taxon>
    </lineage>
</organism>
<accession>B2I1J3</accession>
<evidence type="ECO:0000250" key="1"/>
<evidence type="ECO:0000255" key="2">
    <source>
        <dbReference type="HAMAP-Rule" id="MF_00047"/>
    </source>
</evidence>
<evidence type="ECO:0007829" key="3">
    <source>
        <dbReference type="PDB" id="5D8D"/>
    </source>
</evidence>
<sequence length="308" mass="33361">MSNATKFGKVAVLLGGKSAERAVSLDSGQAVLDALLRSGVQAEAFDPQDRSVTELVNYDRAFIVLHGRGGEDGQIQGVLEWLNIPYTGTGVQGSAIGMDKVKTKQIWQGSDLPTAPYRIITKETDLDSVIAELGLPVIIKPVHEGSSVGMSKVEKAEDFAAAIEKATQHDAVVMAEKWITGREFTISFLNGQPLPVIRLQPPADVAFYDYEAKYQRNDVEYGIPCGLSETEEKKLQALCLRAFQAVGAEGWGRIDAMQDEQGNFWLLEVNTVPGMTSHSLVPKAAKAVGYSFDELCVAILEQTLEGTA</sequence>
<keyword id="KW-0002">3D-structure</keyword>
<keyword id="KW-0067">ATP-binding</keyword>
<keyword id="KW-0133">Cell shape</keyword>
<keyword id="KW-0961">Cell wall biogenesis/degradation</keyword>
<keyword id="KW-0963">Cytoplasm</keyword>
<keyword id="KW-0436">Ligase</keyword>
<keyword id="KW-0460">Magnesium</keyword>
<keyword id="KW-0464">Manganese</keyword>
<keyword id="KW-0479">Metal-binding</keyword>
<keyword id="KW-0547">Nucleotide-binding</keyword>
<keyword id="KW-0573">Peptidoglycan synthesis</keyword>
<feature type="chain" id="PRO_1000091154" description="D-alanine--D-alanine ligase">
    <location>
        <begin position="1"/>
        <end position="308"/>
    </location>
</feature>
<feature type="domain" description="ATP-grasp" evidence="2">
    <location>
        <begin position="104"/>
        <end position="301"/>
    </location>
</feature>
<feature type="binding site" evidence="2">
    <location>
        <begin position="130"/>
        <end position="185"/>
    </location>
    <ligand>
        <name>ATP</name>
        <dbReference type="ChEBI" id="CHEBI:30616"/>
    </ligand>
</feature>
<feature type="binding site" evidence="2">
    <location>
        <position position="255"/>
    </location>
    <ligand>
        <name>Mg(2+)</name>
        <dbReference type="ChEBI" id="CHEBI:18420"/>
        <label>1</label>
    </ligand>
</feature>
<feature type="binding site" evidence="2">
    <location>
        <position position="268"/>
    </location>
    <ligand>
        <name>Mg(2+)</name>
        <dbReference type="ChEBI" id="CHEBI:18420"/>
        <label>1</label>
    </ligand>
</feature>
<feature type="binding site" evidence="2">
    <location>
        <position position="268"/>
    </location>
    <ligand>
        <name>Mg(2+)</name>
        <dbReference type="ChEBI" id="CHEBI:18420"/>
        <label>2</label>
    </ligand>
</feature>
<feature type="binding site" evidence="2">
    <location>
        <position position="270"/>
    </location>
    <ligand>
        <name>Mg(2+)</name>
        <dbReference type="ChEBI" id="CHEBI:18420"/>
        <label>2</label>
    </ligand>
</feature>
<feature type="helix" evidence="3">
    <location>
        <begin position="3"/>
        <end position="7"/>
    </location>
</feature>
<feature type="strand" evidence="3">
    <location>
        <begin position="9"/>
        <end position="13"/>
    </location>
</feature>
<feature type="helix" evidence="3">
    <location>
        <begin position="21"/>
        <end position="37"/>
    </location>
</feature>
<feature type="strand" evidence="3">
    <location>
        <begin position="41"/>
        <end position="45"/>
    </location>
</feature>
<feature type="turn" evidence="3">
    <location>
        <begin position="47"/>
        <end position="49"/>
    </location>
</feature>
<feature type="helix" evidence="3">
    <location>
        <begin position="52"/>
        <end position="57"/>
    </location>
</feature>
<feature type="strand" evidence="3">
    <location>
        <begin position="59"/>
        <end position="63"/>
    </location>
</feature>
<feature type="turn" evidence="3">
    <location>
        <begin position="68"/>
        <end position="70"/>
    </location>
</feature>
<feature type="strand" evidence="3">
    <location>
        <begin position="71"/>
        <end position="73"/>
    </location>
</feature>
<feature type="helix" evidence="3">
    <location>
        <begin position="74"/>
        <end position="81"/>
    </location>
</feature>
<feature type="strand" evidence="3">
    <location>
        <begin position="86"/>
        <end position="88"/>
    </location>
</feature>
<feature type="helix" evidence="3">
    <location>
        <begin position="91"/>
        <end position="97"/>
    </location>
</feature>
<feature type="helix" evidence="3">
    <location>
        <begin position="100"/>
        <end position="108"/>
    </location>
</feature>
<feature type="turn" evidence="3">
    <location>
        <begin position="109"/>
        <end position="111"/>
    </location>
</feature>
<feature type="strand" evidence="3">
    <location>
        <begin position="117"/>
        <end position="120"/>
    </location>
</feature>
<feature type="strand" evidence="3">
    <location>
        <begin position="122"/>
        <end position="124"/>
    </location>
</feature>
<feature type="helix" evidence="3">
    <location>
        <begin position="126"/>
        <end position="133"/>
    </location>
</feature>
<feature type="strand" evidence="3">
    <location>
        <begin position="137"/>
        <end position="143"/>
    </location>
</feature>
<feature type="strand" evidence="3">
    <location>
        <begin position="151"/>
        <end position="153"/>
    </location>
</feature>
<feature type="helix" evidence="3">
    <location>
        <begin position="159"/>
        <end position="169"/>
    </location>
</feature>
<feature type="strand" evidence="3">
    <location>
        <begin position="171"/>
        <end position="177"/>
    </location>
</feature>
<feature type="strand" evidence="3">
    <location>
        <begin position="181"/>
        <end position="189"/>
    </location>
</feature>
<feature type="helix" evidence="3">
    <location>
        <begin position="229"/>
        <end position="245"/>
    </location>
</feature>
<feature type="strand" evidence="3">
    <location>
        <begin position="250"/>
        <end position="259"/>
    </location>
</feature>
<feature type="strand" evidence="3">
    <location>
        <begin position="264"/>
        <end position="272"/>
    </location>
</feature>
<feature type="helix" evidence="3">
    <location>
        <begin position="280"/>
        <end position="286"/>
    </location>
</feature>
<feature type="turn" evidence="3">
    <location>
        <begin position="287"/>
        <end position="289"/>
    </location>
</feature>
<feature type="helix" evidence="3">
    <location>
        <begin position="292"/>
        <end position="301"/>
    </location>
</feature>
<proteinExistence type="evidence at protein level"/>
<comment type="function">
    <text evidence="2">Cell wall formation.</text>
</comment>
<comment type="catalytic activity">
    <reaction evidence="2">
        <text>2 D-alanine + ATP = D-alanyl-D-alanine + ADP + phosphate + H(+)</text>
        <dbReference type="Rhea" id="RHEA:11224"/>
        <dbReference type="ChEBI" id="CHEBI:15378"/>
        <dbReference type="ChEBI" id="CHEBI:30616"/>
        <dbReference type="ChEBI" id="CHEBI:43474"/>
        <dbReference type="ChEBI" id="CHEBI:57416"/>
        <dbReference type="ChEBI" id="CHEBI:57822"/>
        <dbReference type="ChEBI" id="CHEBI:456216"/>
        <dbReference type="EC" id="6.3.2.4"/>
    </reaction>
</comment>
<comment type="cofactor">
    <cofactor evidence="1">
        <name>Mg(2+)</name>
        <dbReference type="ChEBI" id="CHEBI:18420"/>
    </cofactor>
    <cofactor evidence="1">
        <name>Mn(2+)</name>
        <dbReference type="ChEBI" id="CHEBI:29035"/>
    </cofactor>
    <text evidence="1">Binds 2 magnesium or manganese ions per subunit.</text>
</comment>
<comment type="pathway">
    <text evidence="2">Cell wall biogenesis; peptidoglycan biosynthesis.</text>
</comment>
<comment type="subcellular location">
    <subcellularLocation>
        <location evidence="2">Cytoplasm</location>
    </subcellularLocation>
</comment>
<comment type="similarity">
    <text evidence="2">Belongs to the D-alanine--D-alanine ligase family.</text>
</comment>